<gene>
    <name type="ordered locus">MT1447</name>
</gene>
<keyword id="KW-1185">Reference proteome</keyword>
<keyword id="KW-0732">Signal</keyword>
<proteinExistence type="inferred from homology"/>
<organism>
    <name type="scientific">Mycobacterium tuberculosis (strain CDC 1551 / Oshkosh)</name>
    <dbReference type="NCBI Taxonomy" id="83331"/>
    <lineage>
        <taxon>Bacteria</taxon>
        <taxon>Bacillati</taxon>
        <taxon>Actinomycetota</taxon>
        <taxon>Actinomycetes</taxon>
        <taxon>Mycobacteriales</taxon>
        <taxon>Mycobacteriaceae</taxon>
        <taxon>Mycobacterium</taxon>
        <taxon>Mycobacterium tuberculosis complex</taxon>
    </lineage>
</organism>
<evidence type="ECO:0000255" key="1"/>
<evidence type="ECO:0000305" key="2"/>
<reference key="1">
    <citation type="journal article" date="2002" name="J. Bacteriol.">
        <title>Whole-genome comparison of Mycobacterium tuberculosis clinical and laboratory strains.</title>
        <authorList>
            <person name="Fleischmann R.D."/>
            <person name="Alland D."/>
            <person name="Eisen J.A."/>
            <person name="Carpenter L."/>
            <person name="White O."/>
            <person name="Peterson J.D."/>
            <person name="DeBoy R.T."/>
            <person name="Dodson R.J."/>
            <person name="Gwinn M.L."/>
            <person name="Haft D.H."/>
            <person name="Hickey E.K."/>
            <person name="Kolonay J.F."/>
            <person name="Nelson W.C."/>
            <person name="Umayam L.A."/>
            <person name="Ermolaeva M.D."/>
            <person name="Salzberg S.L."/>
            <person name="Delcher A."/>
            <person name="Utterback T.R."/>
            <person name="Weidman J.F."/>
            <person name="Khouri H.M."/>
            <person name="Gill J."/>
            <person name="Mikula A."/>
            <person name="Bishai W."/>
            <person name="Jacobs W.R. Jr."/>
            <person name="Venter J.C."/>
            <person name="Fraser C.M."/>
        </authorList>
    </citation>
    <scope>NUCLEOTIDE SEQUENCE [LARGE SCALE GENOMIC DNA]</scope>
    <source>
        <strain>CDC 1551 / Oshkosh</strain>
    </source>
</reference>
<name>Y1403_MYCTO</name>
<feature type="signal peptide" evidence="1">
    <location>
        <begin position="1"/>
        <end position="30"/>
    </location>
</feature>
<feature type="chain" id="PRO_0000427396" description="Uncharacterized protein MT1447">
    <location>
        <begin position="31"/>
        <end position="274"/>
    </location>
</feature>
<sequence length="274" mass="30077">MTVYTPTSERQAPATTHRQMWALGDYAAIAEELLAPLGPILVSTSGIRRGDRVLDVAAGSGNVSIPAAMAGAHVTASDLTPELLRRAQARAAAAGLELGWREANAEALPFSAGEFDAVLSTIGVMFAPRHQRTADELARVCRRGGKISTLNWTPEGFYGKLLSTIRPYRPTLPAGAPHEVWWGSEDYVSGLFRDHVSDIRTRRGSLTVDRFGCPDECRDYFKNFYGPAINAYRSIADSPECVATLDAEITELCREYLCDGVMQWEYLIFTARKC</sequence>
<accession>P9WLY8</accession>
<accession>L0T6R8</accession>
<accession>P64839</accession>
<accession>P71671</accession>
<dbReference type="EMBL" id="AE000516">
    <property type="protein sequence ID" value="AAK45712.1"/>
    <property type="molecule type" value="Genomic_DNA"/>
</dbReference>
<dbReference type="PIR" id="H70900">
    <property type="entry name" value="H70900"/>
</dbReference>
<dbReference type="RefSeq" id="WP_003407292.1">
    <property type="nucleotide sequence ID" value="NZ_KK341227.1"/>
</dbReference>
<dbReference type="SMR" id="P9WLY8"/>
<dbReference type="KEGG" id="mtc:MT1447"/>
<dbReference type="PATRIC" id="fig|83331.31.peg.1555"/>
<dbReference type="HOGENOM" id="CLU_037990_2_1_11"/>
<dbReference type="Proteomes" id="UP000001020">
    <property type="component" value="Chromosome"/>
</dbReference>
<dbReference type="GO" id="GO:0008168">
    <property type="term" value="F:methyltransferase activity"/>
    <property type="evidence" value="ECO:0007669"/>
    <property type="project" value="TreeGrafter"/>
</dbReference>
<dbReference type="CDD" id="cd02440">
    <property type="entry name" value="AdoMet_MTases"/>
    <property type="match status" value="1"/>
</dbReference>
<dbReference type="Gene3D" id="3.40.50.150">
    <property type="entry name" value="Vaccinia Virus protein VP39"/>
    <property type="match status" value="1"/>
</dbReference>
<dbReference type="InterPro" id="IPR041698">
    <property type="entry name" value="Methyltransf_25"/>
</dbReference>
<dbReference type="InterPro" id="IPR029063">
    <property type="entry name" value="SAM-dependent_MTases_sf"/>
</dbReference>
<dbReference type="PANTHER" id="PTHR43591:SF24">
    <property type="entry name" value="2-METHOXY-6-POLYPRENYL-1,4-BENZOQUINOL METHYLASE, MITOCHONDRIAL"/>
    <property type="match status" value="1"/>
</dbReference>
<dbReference type="PANTHER" id="PTHR43591">
    <property type="entry name" value="METHYLTRANSFERASE"/>
    <property type="match status" value="1"/>
</dbReference>
<dbReference type="Pfam" id="PF13649">
    <property type="entry name" value="Methyltransf_25"/>
    <property type="match status" value="1"/>
</dbReference>
<dbReference type="SUPFAM" id="SSF53335">
    <property type="entry name" value="S-adenosyl-L-methionine-dependent methyltransferases"/>
    <property type="match status" value="1"/>
</dbReference>
<protein>
    <recommendedName>
        <fullName>Uncharacterized protein MT1447</fullName>
    </recommendedName>
</protein>
<comment type="similarity">
    <text evidence="2">To M.tuberculosis Rv1405c.</text>
</comment>